<dbReference type="EMBL" id="AAFI02000043">
    <property type="protein sequence ID" value="EAL66499.1"/>
    <property type="molecule type" value="Genomic_DNA"/>
</dbReference>
<dbReference type="RefSeq" id="XP_640475.1">
    <property type="nucleotide sequence ID" value="XM_635383.1"/>
</dbReference>
<dbReference type="PaxDb" id="44689-DDB0204264"/>
<dbReference type="EnsemblProtists" id="EAL66499">
    <property type="protein sequence ID" value="EAL66499"/>
    <property type="gene ID" value="DDB_G0281879"/>
</dbReference>
<dbReference type="GeneID" id="8623288"/>
<dbReference type="KEGG" id="ddi:DDB_G0281879"/>
<dbReference type="dictyBase" id="DDB_G0281879"/>
<dbReference type="VEuPathDB" id="AmoebaDB:DDB_G0281879"/>
<dbReference type="HOGENOM" id="CLU_2983089_0_0_1"/>
<dbReference type="InParanoid" id="Q54TB4"/>
<dbReference type="PRO" id="PR:Q54TB4"/>
<dbReference type="Proteomes" id="UP000002195">
    <property type="component" value="Chromosome 3"/>
</dbReference>
<reference key="1">
    <citation type="journal article" date="2005" name="Nature">
        <title>The genome of the social amoeba Dictyostelium discoideum.</title>
        <authorList>
            <person name="Eichinger L."/>
            <person name="Pachebat J.A."/>
            <person name="Gloeckner G."/>
            <person name="Rajandream M.A."/>
            <person name="Sucgang R."/>
            <person name="Berriman M."/>
            <person name="Song J."/>
            <person name="Olsen R."/>
            <person name="Szafranski K."/>
            <person name="Xu Q."/>
            <person name="Tunggal B."/>
            <person name="Kummerfeld S."/>
            <person name="Madera M."/>
            <person name="Konfortov B.A."/>
            <person name="Rivero F."/>
            <person name="Bankier A.T."/>
            <person name="Lehmann R."/>
            <person name="Hamlin N."/>
            <person name="Davies R."/>
            <person name="Gaudet P."/>
            <person name="Fey P."/>
            <person name="Pilcher K."/>
            <person name="Chen G."/>
            <person name="Saunders D."/>
            <person name="Sodergren E.J."/>
            <person name="Davis P."/>
            <person name="Kerhornou A."/>
            <person name="Nie X."/>
            <person name="Hall N."/>
            <person name="Anjard C."/>
            <person name="Hemphill L."/>
            <person name="Bason N."/>
            <person name="Farbrother P."/>
            <person name="Desany B."/>
            <person name="Just E."/>
            <person name="Morio T."/>
            <person name="Rost R."/>
            <person name="Churcher C.M."/>
            <person name="Cooper J."/>
            <person name="Haydock S."/>
            <person name="van Driessche N."/>
            <person name="Cronin A."/>
            <person name="Goodhead I."/>
            <person name="Muzny D.M."/>
            <person name="Mourier T."/>
            <person name="Pain A."/>
            <person name="Lu M."/>
            <person name="Harper D."/>
            <person name="Lindsay R."/>
            <person name="Hauser H."/>
            <person name="James K.D."/>
            <person name="Quiles M."/>
            <person name="Madan Babu M."/>
            <person name="Saito T."/>
            <person name="Buchrieser C."/>
            <person name="Wardroper A."/>
            <person name="Felder M."/>
            <person name="Thangavelu M."/>
            <person name="Johnson D."/>
            <person name="Knights A."/>
            <person name="Loulseged H."/>
            <person name="Mungall K.L."/>
            <person name="Oliver K."/>
            <person name="Price C."/>
            <person name="Quail M.A."/>
            <person name="Urushihara H."/>
            <person name="Hernandez J."/>
            <person name="Rabbinowitsch E."/>
            <person name="Steffen D."/>
            <person name="Sanders M."/>
            <person name="Ma J."/>
            <person name="Kohara Y."/>
            <person name="Sharp S."/>
            <person name="Simmonds M.N."/>
            <person name="Spiegler S."/>
            <person name="Tivey A."/>
            <person name="Sugano S."/>
            <person name="White B."/>
            <person name="Walker D."/>
            <person name="Woodward J.R."/>
            <person name="Winckler T."/>
            <person name="Tanaka Y."/>
            <person name="Shaulsky G."/>
            <person name="Schleicher M."/>
            <person name="Weinstock G.M."/>
            <person name="Rosenthal A."/>
            <person name="Cox E.C."/>
            <person name="Chisholm R.L."/>
            <person name="Gibbs R.A."/>
            <person name="Loomis W.F."/>
            <person name="Platzer M."/>
            <person name="Kay R.R."/>
            <person name="Williams J.G."/>
            <person name="Dear P.H."/>
            <person name="Noegel A.A."/>
            <person name="Barrell B.G."/>
            <person name="Kuspa A."/>
        </authorList>
    </citation>
    <scope>NUCLEOTIDE SEQUENCE [LARGE SCALE GENOMIC DNA]</scope>
    <source>
        <strain>AX4</strain>
    </source>
</reference>
<proteinExistence type="predicted"/>
<feature type="chain" id="PRO_0000352410" description="Putative uncharacterized protein DDB_G0281879">
    <location>
        <begin position="1"/>
        <end position="58"/>
    </location>
</feature>
<sequence>MSILSSITSIINMKQNNTSNKQLISNSNFPQQKQQSNNLISANLGEKYTKCKYCHRIL</sequence>
<keyword id="KW-1185">Reference proteome</keyword>
<name>Y4264_DICDI</name>
<protein>
    <recommendedName>
        <fullName>Putative uncharacterized protein DDB_G0281879</fullName>
    </recommendedName>
</protein>
<accession>Q54TB4</accession>
<gene>
    <name type="ORF">DDB_G0281879</name>
</gene>
<organism>
    <name type="scientific">Dictyostelium discoideum</name>
    <name type="common">Social amoeba</name>
    <dbReference type="NCBI Taxonomy" id="44689"/>
    <lineage>
        <taxon>Eukaryota</taxon>
        <taxon>Amoebozoa</taxon>
        <taxon>Evosea</taxon>
        <taxon>Eumycetozoa</taxon>
        <taxon>Dictyostelia</taxon>
        <taxon>Dictyosteliales</taxon>
        <taxon>Dictyosteliaceae</taxon>
        <taxon>Dictyostelium</taxon>
    </lineage>
</organism>